<protein>
    <recommendedName>
        <fullName evidence="7">Putative ribosomal large subunit pseudouridine synthase SVR1, chloroplastic</fullName>
        <ecNumber evidence="7">5.4.99.-</ecNumber>
    </recommendedName>
    <alternativeName>
        <fullName evidence="7">Protein PIGMENT DEFECTIVE 328</fullName>
    </alternativeName>
    <alternativeName>
        <fullName evidence="6">Protein SUPPRESSOR OF VARIEGATION 1</fullName>
    </alternativeName>
</protein>
<feature type="transit peptide" description="Chloroplast" evidence="2">
    <location>
        <begin position="1"/>
        <end position="35"/>
    </location>
</feature>
<feature type="chain" id="PRO_0000439378" description="Putative ribosomal large subunit pseudouridine synthase SVR1, chloroplastic" evidence="2">
    <location>
        <begin position="36"/>
        <end position="410"/>
    </location>
</feature>
<feature type="domain" description="S4 RNA-binding" evidence="3">
    <location>
        <begin position="160"/>
        <end position="229"/>
    </location>
</feature>
<feature type="region of interest" description="Disordered" evidence="4">
    <location>
        <begin position="96"/>
        <end position="143"/>
    </location>
</feature>
<feature type="compositionally biased region" description="Basic residues" evidence="4">
    <location>
        <begin position="107"/>
        <end position="117"/>
    </location>
</feature>
<feature type="compositionally biased region" description="Low complexity" evidence="4">
    <location>
        <begin position="118"/>
        <end position="135"/>
    </location>
</feature>
<feature type="active site" description="Nucleophile" evidence="1">
    <location>
        <position position="274"/>
    </location>
</feature>
<feature type="mutagenesis site" description="No effect on the function in rRNA processing." evidence="5">
    <original>D</original>
    <variation>N</variation>
    <location>
        <position position="274"/>
    </location>
</feature>
<name>SVR1_ARATH</name>
<reference key="1">
    <citation type="journal article" date="1999" name="Nature">
        <title>Sequence and analysis of chromosome 2 of the plant Arabidopsis thaliana.</title>
        <authorList>
            <person name="Lin X."/>
            <person name="Kaul S."/>
            <person name="Rounsley S.D."/>
            <person name="Shea T.P."/>
            <person name="Benito M.-I."/>
            <person name="Town C.D."/>
            <person name="Fujii C.Y."/>
            <person name="Mason T.M."/>
            <person name="Bowman C.L."/>
            <person name="Barnstead M.E."/>
            <person name="Feldblyum T.V."/>
            <person name="Buell C.R."/>
            <person name="Ketchum K.A."/>
            <person name="Lee J.J."/>
            <person name="Ronning C.M."/>
            <person name="Koo H.L."/>
            <person name="Moffat K.S."/>
            <person name="Cronin L.A."/>
            <person name="Shen M."/>
            <person name="Pai G."/>
            <person name="Van Aken S."/>
            <person name="Umayam L."/>
            <person name="Tallon L.J."/>
            <person name="Gill J.E."/>
            <person name="Adams M.D."/>
            <person name="Carrera A.J."/>
            <person name="Creasy T.H."/>
            <person name="Goodman H.M."/>
            <person name="Somerville C.R."/>
            <person name="Copenhaver G.P."/>
            <person name="Preuss D."/>
            <person name="Nierman W.C."/>
            <person name="White O."/>
            <person name="Eisen J.A."/>
            <person name="Salzberg S.L."/>
            <person name="Fraser C.M."/>
            <person name="Venter J.C."/>
        </authorList>
    </citation>
    <scope>NUCLEOTIDE SEQUENCE [LARGE SCALE GENOMIC DNA]</scope>
    <source>
        <strain>cv. Columbia</strain>
    </source>
</reference>
<reference key="2">
    <citation type="journal article" date="2017" name="Plant J.">
        <title>Araport11: a complete reannotation of the Arabidopsis thaliana reference genome.</title>
        <authorList>
            <person name="Cheng C.Y."/>
            <person name="Krishnakumar V."/>
            <person name="Chan A.P."/>
            <person name="Thibaud-Nissen F."/>
            <person name="Schobel S."/>
            <person name="Town C.D."/>
        </authorList>
    </citation>
    <scope>GENOME REANNOTATION</scope>
    <source>
        <strain>cv. Columbia</strain>
    </source>
</reference>
<reference key="3">
    <citation type="journal article" date="2002" name="Science">
        <title>Functional annotation of a full-length Arabidopsis cDNA collection.</title>
        <authorList>
            <person name="Seki M."/>
            <person name="Narusaka M."/>
            <person name="Kamiya A."/>
            <person name="Ishida J."/>
            <person name="Satou M."/>
            <person name="Sakurai T."/>
            <person name="Nakajima M."/>
            <person name="Enju A."/>
            <person name="Akiyama K."/>
            <person name="Oono Y."/>
            <person name="Muramatsu M."/>
            <person name="Hayashizaki Y."/>
            <person name="Kawai J."/>
            <person name="Carninci P."/>
            <person name="Itoh M."/>
            <person name="Ishii Y."/>
            <person name="Arakawa T."/>
            <person name="Shibata K."/>
            <person name="Shinagawa A."/>
            <person name="Shinozaki K."/>
        </authorList>
    </citation>
    <scope>NUCLEOTIDE SEQUENCE [LARGE SCALE MRNA]</scope>
    <source>
        <strain>cv. Columbia</strain>
    </source>
</reference>
<reference key="4">
    <citation type="submission" date="2002-03" db="EMBL/GenBank/DDBJ databases">
        <title>Full-length cDNA from Arabidopsis thaliana.</title>
        <authorList>
            <person name="Brover V.V."/>
            <person name="Troukhan M.E."/>
            <person name="Alexandrov N.A."/>
            <person name="Lu Y.-P."/>
            <person name="Flavell R.B."/>
            <person name="Feldmann K.A."/>
        </authorList>
    </citation>
    <scope>NUCLEOTIDE SEQUENCE [LARGE SCALE MRNA]</scope>
</reference>
<reference key="5">
    <citation type="journal article" date="2008" name="Plant Cell">
        <title>Mutations in SUPPRESSOR OF VARIEGATION1, a factor required for normal chloroplast translation, suppress var2-mediated leaf variegation in Arabidopsis.</title>
        <authorList>
            <person name="Yu F."/>
            <person name="Liu X."/>
            <person name="Alsheikh M."/>
            <person name="Park S."/>
            <person name="Rodermel S."/>
        </authorList>
    </citation>
    <scope>FUNCTION</scope>
    <scope>SUBCELLULAR LOCATION</scope>
    <scope>TISSUE SPECIFICITY</scope>
    <scope>DISRUPTION PHENOTYPE</scope>
    <scope>MUTAGENESIS OF ASP-274</scope>
</reference>
<comment type="function">
    <text evidence="5 8">Responsible for synthesis of pseudouridine in chloroplastic 23S ribosomal RNA (Probable). Necessary for normal chloroplast rRNA processing and translation. Required for normal chloroplast development and maintenance. May function in other plastids, such as root amyloplasts (PubMed:18599582).</text>
</comment>
<comment type="subcellular location">
    <subcellularLocation>
        <location evidence="5">Plastid</location>
        <location evidence="5">Chloroplast</location>
    </subcellularLocation>
</comment>
<comment type="tissue specificity">
    <text evidence="5">Highly expressed in young seedlings. Expressed in roots, rosette leaves, cauline leaves, stems and flowers.</text>
</comment>
<comment type="disruption phenotype">
    <text evidence="5">Yellow-green leaves and significantly reduced plant size. Impaired rRNA processing and translation in chloroplasts.</text>
</comment>
<comment type="similarity">
    <text evidence="7">Belongs to the pseudouridine synthase RsuA family.</text>
</comment>
<comment type="sequence caution" evidence="7">
    <conflict type="erroneous gene model prediction">
        <sequence resource="EMBL-CDS" id="AAC28992"/>
    </conflict>
    <text>Was originally thought to correspond to two different genes.</text>
</comment>
<comment type="sequence caution" evidence="7">
    <conflict type="erroneous gene model prediction">
        <sequence resource="EMBL-CDS" id="AAC28994"/>
    </conflict>
    <text>Was originally thought to correspond to two different genes.</text>
</comment>
<sequence length="410" mass="45108">MASVAASSSISFAASFLKIKAFPLSPRFFPIRTLRCSVSSSSSEPIEFDISFAPPKPKPSSTHGGVTPQQLFIPWIVRSDDGTLKLQSQPPARLIHNLAIDATTQNPKKKDKSKKKQPQATSSSSATTTASSPASHSEVKPKLSKAARRFYNENFKEQPQRLSKVLAAAGVASRRTSEELIFDGKVTVNGILCNTPQTRVDPSRDIIYVNGNRIPKKLPPKVYFALNKPKGYICSSGEKEIKSAISLFDEYLSSWDKRNPGTPKPRLFTVGRLDVATTGLIVVTNDGDFAQKLSHPSSSLPKEYITTVVGDIHKRHLMAISEGTMVEGVHCVPDSVELMPKQHDIPRARLRIVVHEGRNHEVRELVKNAGLEVHSLKRVRIGGFRLPSDLGLGKHVELKQSELKALGWKN</sequence>
<gene>
    <name type="primary">SVR1</name>
    <name evidence="7" type="synonym">PDE328</name>
    <name evidence="9" type="ordered locus">At2g39140</name>
</gene>
<proteinExistence type="evidence at protein level"/>
<evidence type="ECO:0000250" key="1">
    <source>
        <dbReference type="UniProtKB" id="P37765"/>
    </source>
</evidence>
<evidence type="ECO:0000255" key="2"/>
<evidence type="ECO:0000255" key="3">
    <source>
        <dbReference type="PROSITE-ProRule" id="PRU00182"/>
    </source>
</evidence>
<evidence type="ECO:0000256" key="4">
    <source>
        <dbReference type="SAM" id="MobiDB-lite"/>
    </source>
</evidence>
<evidence type="ECO:0000269" key="5">
    <source>
    </source>
</evidence>
<evidence type="ECO:0000303" key="6">
    <source>
    </source>
</evidence>
<evidence type="ECO:0000305" key="7"/>
<evidence type="ECO:0000305" key="8">
    <source>
    </source>
</evidence>
<evidence type="ECO:0000312" key="9">
    <source>
        <dbReference type="Araport" id="AT2G39140"/>
    </source>
</evidence>
<accession>Q8L960</accession>
<accession>O80966</accession>
<accession>O80967</accession>
<dbReference type="EC" id="5.4.99.-" evidence="7"/>
<dbReference type="EMBL" id="AC004697">
    <property type="protein sequence ID" value="AAC28992.1"/>
    <property type="status" value="ALT_SEQ"/>
    <property type="molecule type" value="Genomic_DNA"/>
</dbReference>
<dbReference type="EMBL" id="AC004697">
    <property type="protein sequence ID" value="AAC28994.1"/>
    <property type="status" value="ALT_SEQ"/>
    <property type="molecule type" value="Genomic_DNA"/>
</dbReference>
<dbReference type="EMBL" id="CP002685">
    <property type="protein sequence ID" value="AEC09639.1"/>
    <property type="molecule type" value="Genomic_DNA"/>
</dbReference>
<dbReference type="EMBL" id="AK117682">
    <property type="protein sequence ID" value="BAC42334.1"/>
    <property type="molecule type" value="mRNA"/>
</dbReference>
<dbReference type="EMBL" id="AY088622">
    <property type="protein sequence ID" value="AAM66944.1"/>
    <property type="molecule type" value="mRNA"/>
</dbReference>
<dbReference type="PIR" id="T02587">
    <property type="entry name" value="T02587"/>
</dbReference>
<dbReference type="PIR" id="T02588">
    <property type="entry name" value="T02588"/>
</dbReference>
<dbReference type="RefSeq" id="NP_181447.2">
    <property type="nucleotide sequence ID" value="NM_129471.3"/>
</dbReference>
<dbReference type="SMR" id="Q8L960"/>
<dbReference type="FunCoup" id="Q8L960">
    <property type="interactions" value="330"/>
</dbReference>
<dbReference type="STRING" id="3702.Q8L960"/>
<dbReference type="iPTMnet" id="Q8L960"/>
<dbReference type="PaxDb" id="3702-AT2G39140.1"/>
<dbReference type="ProteomicsDB" id="226787"/>
<dbReference type="EnsemblPlants" id="AT2G39140.1">
    <property type="protein sequence ID" value="AT2G39140.1"/>
    <property type="gene ID" value="AT2G39140"/>
</dbReference>
<dbReference type="GeneID" id="818500"/>
<dbReference type="Gramene" id="AT2G39140.1">
    <property type="protein sequence ID" value="AT2G39140.1"/>
    <property type="gene ID" value="AT2G39140"/>
</dbReference>
<dbReference type="KEGG" id="ath:AT2G39140"/>
<dbReference type="Araport" id="AT2G39140"/>
<dbReference type="TAIR" id="AT2G39140">
    <property type="gene designation" value="SVR1"/>
</dbReference>
<dbReference type="eggNOG" id="ENOG502QT4T">
    <property type="taxonomic scope" value="Eukaryota"/>
</dbReference>
<dbReference type="HOGENOM" id="CLU_056831_0_0_1"/>
<dbReference type="InParanoid" id="Q8L960"/>
<dbReference type="OMA" id="KIDGVMC"/>
<dbReference type="OrthoDB" id="440619at2759"/>
<dbReference type="PhylomeDB" id="Q8L960"/>
<dbReference type="BioCyc" id="ARA:AT2G39140-MONOMER"/>
<dbReference type="BRENDA" id="5.4.99.B22">
    <property type="organism ID" value="399"/>
</dbReference>
<dbReference type="PRO" id="PR:Q8L960"/>
<dbReference type="Proteomes" id="UP000006548">
    <property type="component" value="Chromosome 2"/>
</dbReference>
<dbReference type="ExpressionAtlas" id="Q8L960">
    <property type="expression patterns" value="baseline and differential"/>
</dbReference>
<dbReference type="GO" id="GO:0009501">
    <property type="term" value="C:amyloplast"/>
    <property type="evidence" value="ECO:0000304"/>
    <property type="project" value="TAIR"/>
</dbReference>
<dbReference type="GO" id="GO:0009507">
    <property type="term" value="C:chloroplast"/>
    <property type="evidence" value="ECO:0000314"/>
    <property type="project" value="TAIR"/>
</dbReference>
<dbReference type="GO" id="GO:0003729">
    <property type="term" value="F:mRNA binding"/>
    <property type="evidence" value="ECO:0000314"/>
    <property type="project" value="TAIR"/>
</dbReference>
<dbReference type="GO" id="GO:0009982">
    <property type="term" value="F:pseudouridine synthase activity"/>
    <property type="evidence" value="ECO:0000304"/>
    <property type="project" value="TAIR"/>
</dbReference>
<dbReference type="GO" id="GO:0000488">
    <property type="term" value="P:maturation of LSU-rRNA from tetracistronic rRNA transcript (SSU-rRNA, LSU-rRNA, 4.5S-rRNA, 5S-rRNA)"/>
    <property type="evidence" value="ECO:0000315"/>
    <property type="project" value="TAIR"/>
</dbReference>
<dbReference type="GO" id="GO:0000489">
    <property type="term" value="P:maturation of SSU-rRNA from tetracistronic rRNA transcript (SSU-rRNA, LSU-rRNA, 4.5S-rRNA, 5S-rRNA)"/>
    <property type="evidence" value="ECO:0000315"/>
    <property type="project" value="TAIR"/>
</dbReference>
<dbReference type="GO" id="GO:0032544">
    <property type="term" value="P:plastid translation"/>
    <property type="evidence" value="ECO:0000315"/>
    <property type="project" value="TAIR"/>
</dbReference>
<dbReference type="GO" id="GO:0001522">
    <property type="term" value="P:pseudouridine synthesis"/>
    <property type="evidence" value="ECO:0007669"/>
    <property type="project" value="InterPro"/>
</dbReference>
<dbReference type="CDD" id="cd00165">
    <property type="entry name" value="S4"/>
    <property type="match status" value="1"/>
</dbReference>
<dbReference type="FunFam" id="3.10.290.10:FF:000003">
    <property type="entry name" value="Pseudouridine synthase"/>
    <property type="match status" value="1"/>
</dbReference>
<dbReference type="FunFam" id="3.30.70.1560:FF:000004">
    <property type="entry name" value="Ribosomal large subunit pseudouridine synthase B"/>
    <property type="match status" value="1"/>
</dbReference>
<dbReference type="FunFam" id="3.30.70.580:FF:000013">
    <property type="entry name" value="Ribosomal large subunit pseudouridine synthase B"/>
    <property type="match status" value="1"/>
</dbReference>
<dbReference type="Gene3D" id="3.30.70.1560">
    <property type="entry name" value="Alpha-L RNA-binding motif"/>
    <property type="match status" value="1"/>
</dbReference>
<dbReference type="Gene3D" id="3.30.70.580">
    <property type="entry name" value="Pseudouridine synthase I, catalytic domain, N-terminal subdomain"/>
    <property type="match status" value="1"/>
</dbReference>
<dbReference type="Gene3D" id="3.10.290.10">
    <property type="entry name" value="RNA-binding S4 domain"/>
    <property type="match status" value="1"/>
</dbReference>
<dbReference type="InterPro" id="IPR042092">
    <property type="entry name" value="PsdUridine_s_RsuA/RluB/E/F_cat"/>
</dbReference>
<dbReference type="InterPro" id="IPR020103">
    <property type="entry name" value="PsdUridine_synth_cat_dom_sf"/>
</dbReference>
<dbReference type="InterPro" id="IPR006145">
    <property type="entry name" value="PsdUridine_synth_RsuA/RluA"/>
</dbReference>
<dbReference type="InterPro" id="IPR018496">
    <property type="entry name" value="PsdUridine_synth_RsuA/RluB_CS"/>
</dbReference>
<dbReference type="InterPro" id="IPR050343">
    <property type="entry name" value="RsuA_PseudoU_synthase"/>
</dbReference>
<dbReference type="InterPro" id="IPR002942">
    <property type="entry name" value="S4_RNA-bd"/>
</dbReference>
<dbReference type="InterPro" id="IPR036986">
    <property type="entry name" value="S4_RNA-bd_sf"/>
</dbReference>
<dbReference type="InterPro" id="IPR020094">
    <property type="entry name" value="TruA/RsuA/RluB/E/F_N"/>
</dbReference>
<dbReference type="PANTHER" id="PTHR47683">
    <property type="entry name" value="PSEUDOURIDINE SYNTHASE FAMILY PROTEIN-RELATED"/>
    <property type="match status" value="1"/>
</dbReference>
<dbReference type="PANTHER" id="PTHR47683:SF2">
    <property type="entry name" value="RNA-BINDING S4 DOMAIN-CONTAINING PROTEIN"/>
    <property type="match status" value="1"/>
</dbReference>
<dbReference type="Pfam" id="PF00849">
    <property type="entry name" value="PseudoU_synth_2"/>
    <property type="match status" value="1"/>
</dbReference>
<dbReference type="Pfam" id="PF01479">
    <property type="entry name" value="S4"/>
    <property type="match status" value="1"/>
</dbReference>
<dbReference type="SMART" id="SM00363">
    <property type="entry name" value="S4"/>
    <property type="match status" value="1"/>
</dbReference>
<dbReference type="SUPFAM" id="SSF55174">
    <property type="entry name" value="Alpha-L RNA-binding motif"/>
    <property type="match status" value="1"/>
</dbReference>
<dbReference type="SUPFAM" id="SSF55120">
    <property type="entry name" value="Pseudouridine synthase"/>
    <property type="match status" value="1"/>
</dbReference>
<dbReference type="PROSITE" id="PS01149">
    <property type="entry name" value="PSI_RSU"/>
    <property type="match status" value="1"/>
</dbReference>
<dbReference type="PROSITE" id="PS50889">
    <property type="entry name" value="S4"/>
    <property type="match status" value="1"/>
</dbReference>
<keyword id="KW-0150">Chloroplast</keyword>
<keyword id="KW-0413">Isomerase</keyword>
<keyword id="KW-0934">Plastid</keyword>
<keyword id="KW-1185">Reference proteome</keyword>
<keyword id="KW-0694">RNA-binding</keyword>
<keyword id="KW-0698">rRNA processing</keyword>
<keyword id="KW-0809">Transit peptide</keyword>
<organism>
    <name type="scientific">Arabidopsis thaliana</name>
    <name type="common">Mouse-ear cress</name>
    <dbReference type="NCBI Taxonomy" id="3702"/>
    <lineage>
        <taxon>Eukaryota</taxon>
        <taxon>Viridiplantae</taxon>
        <taxon>Streptophyta</taxon>
        <taxon>Embryophyta</taxon>
        <taxon>Tracheophyta</taxon>
        <taxon>Spermatophyta</taxon>
        <taxon>Magnoliopsida</taxon>
        <taxon>eudicotyledons</taxon>
        <taxon>Gunneridae</taxon>
        <taxon>Pentapetalae</taxon>
        <taxon>rosids</taxon>
        <taxon>malvids</taxon>
        <taxon>Brassicales</taxon>
        <taxon>Brassicaceae</taxon>
        <taxon>Camelineae</taxon>
        <taxon>Arabidopsis</taxon>
    </lineage>
</organism>